<sequence>MQSQRIPGRKRGRPSLHSTPMKMAVHNLYSASAGSLPAVKIPKKRGRKPGYKIKSRVLMTPLALSPPRSTPEPDLSSIPQDAATVPSLAAPQALTVCLYINKQANAGPYLERKKVQQLPEHFGPERPSAVLQQAVQACIDCAHQQKLVFSLVKQGYGGEMVSVSASFDGKQHLRSLPVVNSIGYVLRFLAKLCRSLLCDDLFSHQPFPRGCSASEKVQEKEEGRMESVKTVTTEEYLVNPVGMNRYSVDTSASTFNHRGSLHPSSSLYCKRQNSGDSHLGGGPAATAGGPRTSPMSSGGPSAPGLRPPASSPKRNTTSLEGNRCASSPSQDAQDARRPRSRNPSAWTVEDVVWFVKDADPQALGPHVELFRKHEIDGNALLLLKSDMVMKYLGLKLGPALKLCYHIDKLKQAKF</sequence>
<proteinExistence type="evidence at protein level"/>
<gene>
    <name type="primary">SCML4</name>
</gene>
<feature type="chain" id="PRO_0000337171" description="Sex comb on midleg-like protein 4">
    <location>
        <begin position="1"/>
        <end position="414"/>
    </location>
</feature>
<feature type="domain" description="SAM">
    <location>
        <begin position="288"/>
        <end position="354"/>
    </location>
</feature>
<feature type="region of interest" description="Disordered" evidence="3">
    <location>
        <begin position="257"/>
        <end position="343"/>
    </location>
</feature>
<feature type="compositionally biased region" description="Polar residues" evidence="3">
    <location>
        <begin position="257"/>
        <end position="276"/>
    </location>
</feature>
<feature type="compositionally biased region" description="Low complexity" evidence="3">
    <location>
        <begin position="284"/>
        <end position="304"/>
    </location>
</feature>
<feature type="compositionally biased region" description="Polar residues" evidence="3">
    <location>
        <begin position="312"/>
        <end position="332"/>
    </location>
</feature>
<feature type="modified residue" description="Phosphoserine" evidence="2">
    <location>
        <position position="55"/>
    </location>
</feature>
<feature type="modified residue" description="Phosphoserine" evidence="2">
    <location>
        <position position="65"/>
    </location>
</feature>
<feature type="splice variant" id="VSP_033943" description="In isoform 2." evidence="5">
    <location>
        <begin position="1"/>
        <end position="58"/>
    </location>
</feature>
<feature type="splice variant" id="VSP_033944" description="In isoform 3." evidence="6">
    <original>MQSQRIPGRKRGRPSLHSTPMKMAVHNLYSASAGSLPAVKIPKKRGRKPGYKIKSRVL</original>
    <variation>MPCQRTAWIGCDRQRTPPFHWREIKSRVL</variation>
    <location>
        <begin position="1"/>
        <end position="58"/>
    </location>
</feature>
<feature type="splice variant" id="VSP_033945" description="In isoform 3." evidence="6">
    <original>ASSPSQDAQD</original>
    <variation>GNVMHASASH</variation>
    <location>
        <begin position="325"/>
        <end position="334"/>
    </location>
</feature>
<feature type="splice variant" id="VSP_033946" description="In isoform 3." evidence="6">
    <location>
        <begin position="335"/>
        <end position="414"/>
    </location>
</feature>
<feature type="sequence variant" id="VAR_043669" description="In dbSNP:rs6934505." evidence="4">
    <original>R</original>
    <variation>Q</variation>
    <location>
        <position position="126"/>
    </location>
</feature>
<dbReference type="EMBL" id="AK093571">
    <property type="protein sequence ID" value="BAC04198.1"/>
    <property type="molecule type" value="mRNA"/>
</dbReference>
<dbReference type="EMBL" id="AL512592">
    <property type="status" value="NOT_ANNOTATED_CDS"/>
    <property type="molecule type" value="Genomic_DNA"/>
</dbReference>
<dbReference type="EMBL" id="AL096816">
    <property type="status" value="NOT_ANNOTATED_CDS"/>
    <property type="molecule type" value="Genomic_DNA"/>
</dbReference>
<dbReference type="EMBL" id="CH471051">
    <property type="protein sequence ID" value="EAW48394.1"/>
    <property type="molecule type" value="Genomic_DNA"/>
</dbReference>
<dbReference type="EMBL" id="CH471051">
    <property type="protein sequence ID" value="EAW48395.1"/>
    <property type="molecule type" value="Genomic_DNA"/>
</dbReference>
<dbReference type="EMBL" id="BC033286">
    <property type="protein sequence ID" value="AAH33286.1"/>
    <property type="molecule type" value="mRNA"/>
</dbReference>
<dbReference type="CCDS" id="CCDS5060.2">
    <molecule id="Q8N228-1"/>
</dbReference>
<dbReference type="CCDS" id="CCDS69163.1">
    <molecule id="Q8N228-2"/>
</dbReference>
<dbReference type="RefSeq" id="NP_001273337.1">
    <molecule id="Q8N228-2"/>
    <property type="nucleotide sequence ID" value="NM_001286408.2"/>
</dbReference>
<dbReference type="RefSeq" id="NP_932347.2">
    <molecule id="Q8N228-1"/>
    <property type="nucleotide sequence ID" value="NM_198081.5"/>
</dbReference>
<dbReference type="RefSeq" id="XP_011534008.1">
    <molecule id="Q8N228-2"/>
    <property type="nucleotide sequence ID" value="XM_011535706.2"/>
</dbReference>
<dbReference type="RefSeq" id="XP_016866167.1">
    <property type="nucleotide sequence ID" value="XM_017010678.1"/>
</dbReference>
<dbReference type="RefSeq" id="XP_016866168.1">
    <property type="nucleotide sequence ID" value="XM_017010679.1"/>
</dbReference>
<dbReference type="RefSeq" id="XP_016866169.1">
    <property type="nucleotide sequence ID" value="XM_017010680.1"/>
</dbReference>
<dbReference type="RefSeq" id="XP_016866170.1">
    <property type="nucleotide sequence ID" value="XM_017010681.1"/>
</dbReference>
<dbReference type="RefSeq" id="XP_016866172.1">
    <property type="nucleotide sequence ID" value="XM_017010683.1"/>
</dbReference>
<dbReference type="SMR" id="Q8N228"/>
<dbReference type="BioGRID" id="129164">
    <property type="interactions" value="50"/>
</dbReference>
<dbReference type="FunCoup" id="Q8N228">
    <property type="interactions" value="23"/>
</dbReference>
<dbReference type="IntAct" id="Q8N228">
    <property type="interactions" value="5"/>
</dbReference>
<dbReference type="STRING" id="9606.ENSP00000358016"/>
<dbReference type="GlyGen" id="Q8N228">
    <property type="glycosylation" value="2 sites, 1 N-linked glycan (1 site), 1 O-linked glycan (1 site)"/>
</dbReference>
<dbReference type="iPTMnet" id="Q8N228"/>
<dbReference type="PhosphoSitePlus" id="Q8N228"/>
<dbReference type="SwissPalm" id="Q8N228"/>
<dbReference type="BioMuta" id="SCML4"/>
<dbReference type="DMDM" id="189046183"/>
<dbReference type="jPOST" id="Q8N228"/>
<dbReference type="MassIVE" id="Q8N228"/>
<dbReference type="PaxDb" id="9606-ENSP00000358016"/>
<dbReference type="PeptideAtlas" id="Q8N228"/>
<dbReference type="ProteomicsDB" id="71650">
    <molecule id="Q8N228-1"/>
</dbReference>
<dbReference type="ProteomicsDB" id="71651">
    <molecule id="Q8N228-2"/>
</dbReference>
<dbReference type="ProteomicsDB" id="71652">
    <molecule id="Q8N228-3"/>
</dbReference>
<dbReference type="Antibodypedia" id="32183">
    <property type="antibodies" value="58 antibodies from 18 providers"/>
</dbReference>
<dbReference type="DNASU" id="256380"/>
<dbReference type="Ensembl" id="ENST00000369020.8">
    <molecule id="Q8N228-1"/>
    <property type="protein sequence ID" value="ENSP00000358016.3"/>
    <property type="gene ID" value="ENSG00000146285.15"/>
</dbReference>
<dbReference type="Ensembl" id="ENST00000369022.6">
    <molecule id="Q8N228-2"/>
    <property type="protein sequence ID" value="ENSP00000358018.2"/>
    <property type="gene ID" value="ENSG00000146285.15"/>
</dbReference>
<dbReference type="GeneID" id="256380"/>
<dbReference type="KEGG" id="hsa:256380"/>
<dbReference type="MANE-Select" id="ENST00000369020.8">
    <property type="protein sequence ID" value="ENSP00000358016.3"/>
    <property type="RefSeq nucleotide sequence ID" value="NM_198081.5"/>
    <property type="RefSeq protein sequence ID" value="NP_932347.2"/>
</dbReference>
<dbReference type="UCSC" id="uc003prz.6">
    <molecule id="Q8N228-1"/>
    <property type="organism name" value="human"/>
</dbReference>
<dbReference type="AGR" id="HGNC:21397"/>
<dbReference type="CTD" id="256380"/>
<dbReference type="DisGeNET" id="256380"/>
<dbReference type="GeneCards" id="SCML4"/>
<dbReference type="HGNC" id="HGNC:21397">
    <property type="gene designation" value="SCML4"/>
</dbReference>
<dbReference type="HPA" id="ENSG00000146285">
    <property type="expression patterns" value="Tissue enhanced (intestine, lymphoid tissue)"/>
</dbReference>
<dbReference type="neXtProt" id="NX_Q8N228"/>
<dbReference type="OpenTargets" id="ENSG00000146285"/>
<dbReference type="PharmGKB" id="PA134946179"/>
<dbReference type="VEuPathDB" id="HostDB:ENSG00000146285"/>
<dbReference type="eggNOG" id="KOG3766">
    <property type="taxonomic scope" value="Eukaryota"/>
</dbReference>
<dbReference type="GeneTree" id="ENSGT00940000157463"/>
<dbReference type="HOGENOM" id="CLU_045829_0_0_1"/>
<dbReference type="InParanoid" id="Q8N228"/>
<dbReference type="OMA" id="VKQGHSG"/>
<dbReference type="OrthoDB" id="5912862at2759"/>
<dbReference type="PAN-GO" id="Q8N228">
    <property type="GO annotations" value="4 GO annotations based on evolutionary models"/>
</dbReference>
<dbReference type="PhylomeDB" id="Q8N228"/>
<dbReference type="TreeFam" id="TF106488"/>
<dbReference type="PathwayCommons" id="Q8N228"/>
<dbReference type="SignaLink" id="Q8N228"/>
<dbReference type="BioGRID-ORCS" id="256380">
    <property type="hits" value="17 hits in 1153 CRISPR screens"/>
</dbReference>
<dbReference type="ChiTaRS" id="SCML4">
    <property type="organism name" value="human"/>
</dbReference>
<dbReference type="GenomeRNAi" id="256380"/>
<dbReference type="Pharos" id="Q8N228">
    <property type="development level" value="Tdark"/>
</dbReference>
<dbReference type="PRO" id="PR:Q8N228"/>
<dbReference type="Proteomes" id="UP000005640">
    <property type="component" value="Chromosome 6"/>
</dbReference>
<dbReference type="RNAct" id="Q8N228">
    <property type="molecule type" value="protein"/>
</dbReference>
<dbReference type="Bgee" id="ENSG00000146285">
    <property type="expression patterns" value="Expressed in granulocyte and 116 other cell types or tissues"/>
</dbReference>
<dbReference type="ExpressionAtlas" id="Q8N228">
    <property type="expression patterns" value="baseline and differential"/>
</dbReference>
<dbReference type="GO" id="GO:0005634">
    <property type="term" value="C:nucleus"/>
    <property type="evidence" value="ECO:0000318"/>
    <property type="project" value="GO_Central"/>
</dbReference>
<dbReference type="GO" id="GO:0003682">
    <property type="term" value="F:chromatin binding"/>
    <property type="evidence" value="ECO:0000318"/>
    <property type="project" value="GO_Central"/>
</dbReference>
<dbReference type="GO" id="GO:0042393">
    <property type="term" value="F:histone binding"/>
    <property type="evidence" value="ECO:0000318"/>
    <property type="project" value="GO_Central"/>
</dbReference>
<dbReference type="GO" id="GO:0045892">
    <property type="term" value="P:negative regulation of DNA-templated transcription"/>
    <property type="evidence" value="ECO:0000318"/>
    <property type="project" value="GO_Central"/>
</dbReference>
<dbReference type="CDD" id="cd09578">
    <property type="entry name" value="SAM_Scm"/>
    <property type="match status" value="1"/>
</dbReference>
<dbReference type="FunFam" id="1.10.150.50:FF:000018">
    <property type="entry name" value="Polycomb protein scmh1 isoform 4"/>
    <property type="match status" value="1"/>
</dbReference>
<dbReference type="FunFam" id="3.90.1150.190:FF:000001">
    <property type="entry name" value="Polycomb protein scmh1 isoform 4"/>
    <property type="match status" value="1"/>
</dbReference>
<dbReference type="Gene3D" id="3.90.1150.190">
    <property type="entry name" value="SLED domain"/>
    <property type="match status" value="1"/>
</dbReference>
<dbReference type="Gene3D" id="1.10.150.50">
    <property type="entry name" value="Transcription Factor, Ets-1"/>
    <property type="match status" value="1"/>
</dbReference>
<dbReference type="InterPro" id="IPR050548">
    <property type="entry name" value="PcG_chromatin_remod_factors"/>
</dbReference>
<dbReference type="InterPro" id="IPR001660">
    <property type="entry name" value="SAM"/>
</dbReference>
<dbReference type="InterPro" id="IPR013761">
    <property type="entry name" value="SAM/pointed_sf"/>
</dbReference>
<dbReference type="InterPro" id="IPR047531">
    <property type="entry name" value="SAM_Scm-like"/>
</dbReference>
<dbReference type="InterPro" id="IPR033763">
    <property type="entry name" value="SCML2_RBR"/>
</dbReference>
<dbReference type="InterPro" id="IPR021987">
    <property type="entry name" value="SLED"/>
</dbReference>
<dbReference type="InterPro" id="IPR038348">
    <property type="entry name" value="SLED_sf"/>
</dbReference>
<dbReference type="PANTHER" id="PTHR12247">
    <property type="entry name" value="POLYCOMB GROUP PROTEIN"/>
    <property type="match status" value="1"/>
</dbReference>
<dbReference type="PANTHER" id="PTHR12247:SF85">
    <property type="entry name" value="SEX COMB ON MIDLEG-LIKE PROTEIN 4"/>
    <property type="match status" value="1"/>
</dbReference>
<dbReference type="Pfam" id="PF17208">
    <property type="entry name" value="RBR"/>
    <property type="match status" value="1"/>
</dbReference>
<dbReference type="Pfam" id="PF00536">
    <property type="entry name" value="SAM_1"/>
    <property type="match status" value="1"/>
</dbReference>
<dbReference type="Pfam" id="PF12140">
    <property type="entry name" value="SLED"/>
    <property type="match status" value="1"/>
</dbReference>
<dbReference type="SMART" id="SM00454">
    <property type="entry name" value="SAM"/>
    <property type="match status" value="1"/>
</dbReference>
<dbReference type="SUPFAM" id="SSF47769">
    <property type="entry name" value="SAM/Pointed domain"/>
    <property type="match status" value="1"/>
</dbReference>
<evidence type="ECO:0000250" key="1"/>
<evidence type="ECO:0000250" key="2">
    <source>
        <dbReference type="UniProtKB" id="Q80VG1"/>
    </source>
</evidence>
<evidence type="ECO:0000256" key="3">
    <source>
        <dbReference type="SAM" id="MobiDB-lite"/>
    </source>
</evidence>
<evidence type="ECO:0000269" key="4">
    <source>
    </source>
</evidence>
<evidence type="ECO:0000303" key="5">
    <source>
    </source>
</evidence>
<evidence type="ECO:0000303" key="6">
    <source>
    </source>
</evidence>
<evidence type="ECO:0000305" key="7"/>
<accession>Q8N228</accession>
<accession>B0QZ10</accession>
<accession>B0QZ11</accession>
<accession>B7ZBX3</accession>
<accession>Q5JXD0</accession>
<accession>Q5T0T6</accession>
<accession>Q8IYY6</accession>
<protein>
    <recommendedName>
        <fullName>Sex comb on midleg-like protein 4</fullName>
    </recommendedName>
</protein>
<reference key="1">
    <citation type="journal article" date="2004" name="Nat. Genet.">
        <title>Complete sequencing and characterization of 21,243 full-length human cDNAs.</title>
        <authorList>
            <person name="Ota T."/>
            <person name="Suzuki Y."/>
            <person name="Nishikawa T."/>
            <person name="Otsuki T."/>
            <person name="Sugiyama T."/>
            <person name="Irie R."/>
            <person name="Wakamatsu A."/>
            <person name="Hayashi K."/>
            <person name="Sato H."/>
            <person name="Nagai K."/>
            <person name="Kimura K."/>
            <person name="Makita H."/>
            <person name="Sekine M."/>
            <person name="Obayashi M."/>
            <person name="Nishi T."/>
            <person name="Shibahara T."/>
            <person name="Tanaka T."/>
            <person name="Ishii S."/>
            <person name="Yamamoto J."/>
            <person name="Saito K."/>
            <person name="Kawai Y."/>
            <person name="Isono Y."/>
            <person name="Nakamura Y."/>
            <person name="Nagahari K."/>
            <person name="Murakami K."/>
            <person name="Yasuda T."/>
            <person name="Iwayanagi T."/>
            <person name="Wagatsuma M."/>
            <person name="Shiratori A."/>
            <person name="Sudo H."/>
            <person name="Hosoiri T."/>
            <person name="Kaku Y."/>
            <person name="Kodaira H."/>
            <person name="Kondo H."/>
            <person name="Sugawara M."/>
            <person name="Takahashi M."/>
            <person name="Kanda K."/>
            <person name="Yokoi T."/>
            <person name="Furuya T."/>
            <person name="Kikkawa E."/>
            <person name="Omura Y."/>
            <person name="Abe K."/>
            <person name="Kamihara K."/>
            <person name="Katsuta N."/>
            <person name="Sato K."/>
            <person name="Tanikawa M."/>
            <person name="Yamazaki M."/>
            <person name="Ninomiya K."/>
            <person name="Ishibashi T."/>
            <person name="Yamashita H."/>
            <person name="Murakawa K."/>
            <person name="Fujimori K."/>
            <person name="Tanai H."/>
            <person name="Kimata M."/>
            <person name="Watanabe M."/>
            <person name="Hiraoka S."/>
            <person name="Chiba Y."/>
            <person name="Ishida S."/>
            <person name="Ono Y."/>
            <person name="Takiguchi S."/>
            <person name="Watanabe S."/>
            <person name="Yosida M."/>
            <person name="Hotuta T."/>
            <person name="Kusano J."/>
            <person name="Kanehori K."/>
            <person name="Takahashi-Fujii A."/>
            <person name="Hara H."/>
            <person name="Tanase T.-O."/>
            <person name="Nomura Y."/>
            <person name="Togiya S."/>
            <person name="Komai F."/>
            <person name="Hara R."/>
            <person name="Takeuchi K."/>
            <person name="Arita M."/>
            <person name="Imose N."/>
            <person name="Musashino K."/>
            <person name="Yuuki H."/>
            <person name="Oshima A."/>
            <person name="Sasaki N."/>
            <person name="Aotsuka S."/>
            <person name="Yoshikawa Y."/>
            <person name="Matsunawa H."/>
            <person name="Ichihara T."/>
            <person name="Shiohata N."/>
            <person name="Sano S."/>
            <person name="Moriya S."/>
            <person name="Momiyama H."/>
            <person name="Satoh N."/>
            <person name="Takami S."/>
            <person name="Terashima Y."/>
            <person name="Suzuki O."/>
            <person name="Nakagawa S."/>
            <person name="Senoh A."/>
            <person name="Mizoguchi H."/>
            <person name="Goto Y."/>
            <person name="Shimizu F."/>
            <person name="Wakebe H."/>
            <person name="Hishigaki H."/>
            <person name="Watanabe T."/>
            <person name="Sugiyama A."/>
            <person name="Takemoto M."/>
            <person name="Kawakami B."/>
            <person name="Yamazaki M."/>
            <person name="Watanabe K."/>
            <person name="Kumagai A."/>
            <person name="Itakura S."/>
            <person name="Fukuzumi Y."/>
            <person name="Fujimori Y."/>
            <person name="Komiyama M."/>
            <person name="Tashiro H."/>
            <person name="Tanigami A."/>
            <person name="Fujiwara T."/>
            <person name="Ono T."/>
            <person name="Yamada K."/>
            <person name="Fujii Y."/>
            <person name="Ozaki K."/>
            <person name="Hirao M."/>
            <person name="Ohmori Y."/>
            <person name="Kawabata A."/>
            <person name="Hikiji T."/>
            <person name="Kobatake N."/>
            <person name="Inagaki H."/>
            <person name="Ikema Y."/>
            <person name="Okamoto S."/>
            <person name="Okitani R."/>
            <person name="Kawakami T."/>
            <person name="Noguchi S."/>
            <person name="Itoh T."/>
            <person name="Shigeta K."/>
            <person name="Senba T."/>
            <person name="Matsumura K."/>
            <person name="Nakajima Y."/>
            <person name="Mizuno T."/>
            <person name="Morinaga M."/>
            <person name="Sasaki M."/>
            <person name="Togashi T."/>
            <person name="Oyama M."/>
            <person name="Hata H."/>
            <person name="Watanabe M."/>
            <person name="Komatsu T."/>
            <person name="Mizushima-Sugano J."/>
            <person name="Satoh T."/>
            <person name="Shirai Y."/>
            <person name="Takahashi Y."/>
            <person name="Nakagawa K."/>
            <person name="Okumura K."/>
            <person name="Nagase T."/>
            <person name="Nomura N."/>
            <person name="Kikuchi H."/>
            <person name="Masuho Y."/>
            <person name="Yamashita R."/>
            <person name="Nakai K."/>
            <person name="Yada T."/>
            <person name="Nakamura Y."/>
            <person name="Ohara O."/>
            <person name="Isogai T."/>
            <person name="Sugano S."/>
        </authorList>
    </citation>
    <scope>NUCLEOTIDE SEQUENCE [LARGE SCALE MRNA] (ISOFORM 2)</scope>
    <scope>VARIANT GLN-126</scope>
    <source>
        <tissue>Thymus</tissue>
    </source>
</reference>
<reference key="2">
    <citation type="journal article" date="2003" name="Nature">
        <title>The DNA sequence and analysis of human chromosome 6.</title>
        <authorList>
            <person name="Mungall A.J."/>
            <person name="Palmer S.A."/>
            <person name="Sims S.K."/>
            <person name="Edwards C.A."/>
            <person name="Ashurst J.L."/>
            <person name="Wilming L."/>
            <person name="Jones M.C."/>
            <person name="Horton R."/>
            <person name="Hunt S.E."/>
            <person name="Scott C.E."/>
            <person name="Gilbert J.G.R."/>
            <person name="Clamp M.E."/>
            <person name="Bethel G."/>
            <person name="Milne S."/>
            <person name="Ainscough R."/>
            <person name="Almeida J.P."/>
            <person name="Ambrose K.D."/>
            <person name="Andrews T.D."/>
            <person name="Ashwell R.I.S."/>
            <person name="Babbage A.K."/>
            <person name="Bagguley C.L."/>
            <person name="Bailey J."/>
            <person name="Banerjee R."/>
            <person name="Barker D.J."/>
            <person name="Barlow K.F."/>
            <person name="Bates K."/>
            <person name="Beare D.M."/>
            <person name="Beasley H."/>
            <person name="Beasley O."/>
            <person name="Bird C.P."/>
            <person name="Blakey S.E."/>
            <person name="Bray-Allen S."/>
            <person name="Brook J."/>
            <person name="Brown A.J."/>
            <person name="Brown J.Y."/>
            <person name="Burford D.C."/>
            <person name="Burrill W."/>
            <person name="Burton J."/>
            <person name="Carder C."/>
            <person name="Carter N.P."/>
            <person name="Chapman J.C."/>
            <person name="Clark S.Y."/>
            <person name="Clark G."/>
            <person name="Clee C.M."/>
            <person name="Clegg S."/>
            <person name="Cobley V."/>
            <person name="Collier R.E."/>
            <person name="Collins J.E."/>
            <person name="Colman L.K."/>
            <person name="Corby N.R."/>
            <person name="Coville G.J."/>
            <person name="Culley K.M."/>
            <person name="Dhami P."/>
            <person name="Davies J."/>
            <person name="Dunn M."/>
            <person name="Earthrowl M.E."/>
            <person name="Ellington A.E."/>
            <person name="Evans K.A."/>
            <person name="Faulkner L."/>
            <person name="Francis M.D."/>
            <person name="Frankish A."/>
            <person name="Frankland J."/>
            <person name="French L."/>
            <person name="Garner P."/>
            <person name="Garnett J."/>
            <person name="Ghori M.J."/>
            <person name="Gilby L.M."/>
            <person name="Gillson C.J."/>
            <person name="Glithero R.J."/>
            <person name="Grafham D.V."/>
            <person name="Grant M."/>
            <person name="Gribble S."/>
            <person name="Griffiths C."/>
            <person name="Griffiths M.N.D."/>
            <person name="Hall R."/>
            <person name="Halls K.S."/>
            <person name="Hammond S."/>
            <person name="Harley J.L."/>
            <person name="Hart E.A."/>
            <person name="Heath P.D."/>
            <person name="Heathcott R."/>
            <person name="Holmes S.J."/>
            <person name="Howden P.J."/>
            <person name="Howe K.L."/>
            <person name="Howell G.R."/>
            <person name="Huckle E."/>
            <person name="Humphray S.J."/>
            <person name="Humphries M.D."/>
            <person name="Hunt A.R."/>
            <person name="Johnson C.M."/>
            <person name="Joy A.A."/>
            <person name="Kay M."/>
            <person name="Keenan S.J."/>
            <person name="Kimberley A.M."/>
            <person name="King A."/>
            <person name="Laird G.K."/>
            <person name="Langford C."/>
            <person name="Lawlor S."/>
            <person name="Leongamornlert D.A."/>
            <person name="Leversha M."/>
            <person name="Lloyd C.R."/>
            <person name="Lloyd D.M."/>
            <person name="Loveland J.E."/>
            <person name="Lovell J."/>
            <person name="Martin S."/>
            <person name="Mashreghi-Mohammadi M."/>
            <person name="Maslen G.L."/>
            <person name="Matthews L."/>
            <person name="McCann O.T."/>
            <person name="McLaren S.J."/>
            <person name="McLay K."/>
            <person name="McMurray A."/>
            <person name="Moore M.J.F."/>
            <person name="Mullikin J.C."/>
            <person name="Niblett D."/>
            <person name="Nickerson T."/>
            <person name="Novik K.L."/>
            <person name="Oliver K."/>
            <person name="Overton-Larty E.K."/>
            <person name="Parker A."/>
            <person name="Patel R."/>
            <person name="Pearce A.V."/>
            <person name="Peck A.I."/>
            <person name="Phillimore B.J.C.T."/>
            <person name="Phillips S."/>
            <person name="Plumb R.W."/>
            <person name="Porter K.M."/>
            <person name="Ramsey Y."/>
            <person name="Ranby S.A."/>
            <person name="Rice C.M."/>
            <person name="Ross M.T."/>
            <person name="Searle S.M."/>
            <person name="Sehra H.K."/>
            <person name="Sheridan E."/>
            <person name="Skuce C.D."/>
            <person name="Smith S."/>
            <person name="Smith M."/>
            <person name="Spraggon L."/>
            <person name="Squares S.L."/>
            <person name="Steward C.A."/>
            <person name="Sycamore N."/>
            <person name="Tamlyn-Hall G."/>
            <person name="Tester J."/>
            <person name="Theaker A.J."/>
            <person name="Thomas D.W."/>
            <person name="Thorpe A."/>
            <person name="Tracey A."/>
            <person name="Tromans A."/>
            <person name="Tubby B."/>
            <person name="Wall M."/>
            <person name="Wallis J.M."/>
            <person name="West A.P."/>
            <person name="White S.S."/>
            <person name="Whitehead S.L."/>
            <person name="Whittaker H."/>
            <person name="Wild A."/>
            <person name="Willey D.J."/>
            <person name="Wilmer T.E."/>
            <person name="Wood J.M."/>
            <person name="Wray P.W."/>
            <person name="Wyatt J.C."/>
            <person name="Young L."/>
            <person name="Younger R.M."/>
            <person name="Bentley D.R."/>
            <person name="Coulson A."/>
            <person name="Durbin R.M."/>
            <person name="Hubbard T."/>
            <person name="Sulston J.E."/>
            <person name="Dunham I."/>
            <person name="Rogers J."/>
            <person name="Beck S."/>
        </authorList>
    </citation>
    <scope>NUCLEOTIDE SEQUENCE [LARGE SCALE GENOMIC DNA]</scope>
</reference>
<reference key="3">
    <citation type="submission" date="2005-09" db="EMBL/GenBank/DDBJ databases">
        <authorList>
            <person name="Mural R.J."/>
            <person name="Istrail S."/>
            <person name="Sutton G.G."/>
            <person name="Florea L."/>
            <person name="Halpern A.L."/>
            <person name="Mobarry C.M."/>
            <person name="Lippert R."/>
            <person name="Walenz B."/>
            <person name="Shatkay H."/>
            <person name="Dew I."/>
            <person name="Miller J.R."/>
            <person name="Flanigan M.J."/>
            <person name="Edwards N.J."/>
            <person name="Bolanos R."/>
            <person name="Fasulo D."/>
            <person name="Halldorsson B.V."/>
            <person name="Hannenhalli S."/>
            <person name="Turner R."/>
            <person name="Yooseph S."/>
            <person name="Lu F."/>
            <person name="Nusskern D.R."/>
            <person name="Shue B.C."/>
            <person name="Zheng X.H."/>
            <person name="Zhong F."/>
            <person name="Delcher A.L."/>
            <person name="Huson D.H."/>
            <person name="Kravitz S.A."/>
            <person name="Mouchard L."/>
            <person name="Reinert K."/>
            <person name="Remington K.A."/>
            <person name="Clark A.G."/>
            <person name="Waterman M.S."/>
            <person name="Eichler E.E."/>
            <person name="Adams M.D."/>
            <person name="Hunkapiller M.W."/>
            <person name="Myers E.W."/>
            <person name="Venter J.C."/>
        </authorList>
    </citation>
    <scope>NUCLEOTIDE SEQUENCE [LARGE SCALE GENOMIC DNA]</scope>
</reference>
<reference key="4">
    <citation type="journal article" date="2004" name="Genome Res.">
        <title>The status, quality, and expansion of the NIH full-length cDNA project: the Mammalian Gene Collection (MGC).</title>
        <authorList>
            <consortium name="The MGC Project Team"/>
        </authorList>
    </citation>
    <scope>NUCLEOTIDE SEQUENCE [LARGE SCALE MRNA] (ISOFORM 3)</scope>
    <source>
        <tissue>Testis</tissue>
    </source>
</reference>
<reference key="5">
    <citation type="journal article" date="2014" name="J. Proteomics">
        <title>An enzyme assisted RP-RPLC approach for in-depth analysis of human liver phosphoproteome.</title>
        <authorList>
            <person name="Bian Y."/>
            <person name="Song C."/>
            <person name="Cheng K."/>
            <person name="Dong M."/>
            <person name="Wang F."/>
            <person name="Huang J."/>
            <person name="Sun D."/>
            <person name="Wang L."/>
            <person name="Ye M."/>
            <person name="Zou H."/>
        </authorList>
    </citation>
    <scope>IDENTIFICATION BY MASS SPECTROMETRY [LARGE SCALE ANALYSIS]</scope>
    <source>
        <tissue>Liver</tissue>
    </source>
</reference>
<organism>
    <name type="scientific">Homo sapiens</name>
    <name type="common">Human</name>
    <dbReference type="NCBI Taxonomy" id="9606"/>
    <lineage>
        <taxon>Eukaryota</taxon>
        <taxon>Metazoa</taxon>
        <taxon>Chordata</taxon>
        <taxon>Craniata</taxon>
        <taxon>Vertebrata</taxon>
        <taxon>Euteleostomi</taxon>
        <taxon>Mammalia</taxon>
        <taxon>Eutheria</taxon>
        <taxon>Euarchontoglires</taxon>
        <taxon>Primates</taxon>
        <taxon>Haplorrhini</taxon>
        <taxon>Catarrhini</taxon>
        <taxon>Hominidae</taxon>
        <taxon>Homo</taxon>
    </lineage>
</organism>
<name>SCML4_HUMAN</name>
<comment type="function">
    <text evidence="1">Putative Polycomb group (PcG) protein. PcG proteins act by forming multiprotein complexes, which are required to maintain the transcriptionally repressive state of homeotic genes throughout development (By similarity).</text>
</comment>
<comment type="interaction">
    <interactant intactId="EBI-17182094">
        <id>Q8N228-3</id>
    </interactant>
    <interactant intactId="EBI-10192241">
        <id>O95833</id>
        <label>CLIC3</label>
    </interactant>
    <organismsDiffer>false</organismsDiffer>
    <experiments>3</experiments>
</comment>
<comment type="interaction">
    <interactant intactId="EBI-17182094">
        <id>Q8N228-3</id>
    </interactant>
    <interactant intactId="EBI-12010512">
        <id>Q96MK2</id>
        <label>RIPOR3</label>
    </interactant>
    <organismsDiffer>false</organismsDiffer>
    <experiments>3</experiments>
</comment>
<comment type="subcellular location">
    <subcellularLocation>
        <location evidence="7">Nucleus</location>
    </subcellularLocation>
</comment>
<comment type="alternative products">
    <event type="alternative splicing"/>
    <isoform>
        <id>Q8N228-1</id>
        <name>1</name>
        <sequence type="displayed"/>
    </isoform>
    <isoform>
        <id>Q8N228-2</id>
        <name>2</name>
        <sequence type="described" ref="VSP_033943"/>
    </isoform>
    <isoform>
        <id>Q8N228-3</id>
        <name>3</name>
        <sequence type="described" ref="VSP_033944 VSP_033945 VSP_033946"/>
    </isoform>
</comment>
<comment type="similarity">
    <text evidence="7">Belongs to the SCM family.</text>
</comment>
<keyword id="KW-0025">Alternative splicing</keyword>
<keyword id="KW-0539">Nucleus</keyword>
<keyword id="KW-0597">Phosphoprotein</keyword>
<keyword id="KW-1267">Proteomics identification</keyword>
<keyword id="KW-1185">Reference proteome</keyword>
<keyword id="KW-0678">Repressor</keyword>
<keyword id="KW-0804">Transcription</keyword>
<keyword id="KW-0805">Transcription regulation</keyword>